<accession>Q6AVI8</accession>
<sequence length="574" mass="63978">MGNTCCVAPATTDEVGAPPRDHHHAAKKSPAPSATTTTATRQRHGQEPKPKPKPRARAKPNPYDWAPPRVLPARGGAAASAVRVLEGVVPHHPRLRVTDKYQLGRELGRGEFGVTHLATDRATRERLACKSIPKRRLRTAVDVADVRREVAIMASLPDHPALVRLRAAYEDADAVHLVMELCDGGELFDRIVARGRYTERAAAAAARTVAEVVRACHAHGVMHRDLKPENFLYAGKAEDAQLKAIDFGLSVFFRPGERFREIVGSPYYMAPEVLRRDYGPEVDIWSAGVILYILLCGVPPFWAETEQGVARAILRGAADFDREPWPRISRAAKSLVRQMLDVDPRRRPTAQQVLDHPWLHHAARAPNVPLGDVVRARLKQFSLMNRLKKKAMRVIAEHLSVEEVEVIKDMFALMDTDNNGRVTLQELKDGLTKVGSKLAEPEMELLMEAADVDGNGYLDYGEFVAVTIHLQRLSNDNHLRTAFLFFDKDGSGYIDRAELADALADDSGHADDAVLDHILREVDTDKDGRISYEEFVAMMKSGTDWRKASRQYSRERFKTLSNSLIKDGSITMAR</sequence>
<reference key="1">
    <citation type="journal article" date="2005" name="Genome Res.">
        <title>Sequence, annotation, and analysis of synteny between rice chromosome 3 and diverged grass species.</title>
        <authorList>
            <consortium name="The rice chromosome 3 sequencing consortium"/>
            <person name="Buell C.R."/>
            <person name="Yuan Q."/>
            <person name="Ouyang S."/>
            <person name="Liu J."/>
            <person name="Zhu W."/>
            <person name="Wang A."/>
            <person name="Maiti R."/>
            <person name="Haas B."/>
            <person name="Wortman J."/>
            <person name="Pertea M."/>
            <person name="Jones K.M."/>
            <person name="Kim M."/>
            <person name="Overton L."/>
            <person name="Tsitrin T."/>
            <person name="Fadrosh D."/>
            <person name="Bera J."/>
            <person name="Weaver B."/>
            <person name="Jin S."/>
            <person name="Johri S."/>
            <person name="Reardon M."/>
            <person name="Webb K."/>
            <person name="Hill J."/>
            <person name="Moffat K."/>
            <person name="Tallon L."/>
            <person name="Van Aken S."/>
            <person name="Lewis M."/>
            <person name="Utterback T."/>
            <person name="Feldblyum T."/>
            <person name="Zismann V."/>
            <person name="Iobst S."/>
            <person name="Hsiao J."/>
            <person name="de Vazeille A.R."/>
            <person name="Salzberg S.L."/>
            <person name="White O."/>
            <person name="Fraser C.M."/>
            <person name="Yu Y."/>
            <person name="Kim H."/>
            <person name="Rambo T."/>
            <person name="Currie J."/>
            <person name="Collura K."/>
            <person name="Kernodle-Thompson S."/>
            <person name="Wei F."/>
            <person name="Kudrna K."/>
            <person name="Ammiraju J.S.S."/>
            <person name="Luo M."/>
            <person name="Goicoechea J.L."/>
            <person name="Wing R.A."/>
            <person name="Henry D."/>
            <person name="Oates R."/>
            <person name="Palmer M."/>
            <person name="Pries G."/>
            <person name="Saski C."/>
            <person name="Simmons J."/>
            <person name="Soderlund C."/>
            <person name="Nelson W."/>
            <person name="de la Bastide M."/>
            <person name="Spiegel L."/>
            <person name="Nascimento L."/>
            <person name="Huang E."/>
            <person name="Preston R."/>
            <person name="Zutavern T."/>
            <person name="Palmer L."/>
            <person name="O'Shaughnessy A."/>
            <person name="Dike S."/>
            <person name="McCombie W.R."/>
            <person name="Minx P."/>
            <person name="Cordum H."/>
            <person name="Wilson R."/>
            <person name="Jin W."/>
            <person name="Lee H.R."/>
            <person name="Jiang J."/>
            <person name="Jackson S."/>
        </authorList>
    </citation>
    <scope>NUCLEOTIDE SEQUENCE [LARGE SCALE GENOMIC DNA]</scope>
    <source>
        <strain>cv. Nipponbare</strain>
    </source>
</reference>
<reference key="2">
    <citation type="journal article" date="2005" name="Nature">
        <title>The map-based sequence of the rice genome.</title>
        <authorList>
            <consortium name="International rice genome sequencing project (IRGSP)"/>
        </authorList>
    </citation>
    <scope>NUCLEOTIDE SEQUENCE [LARGE SCALE GENOMIC DNA]</scope>
    <source>
        <strain>cv. Nipponbare</strain>
    </source>
</reference>
<reference key="3">
    <citation type="journal article" date="2008" name="Nucleic Acids Res.">
        <title>The rice annotation project database (RAP-DB): 2008 update.</title>
        <authorList>
            <consortium name="The rice annotation project (RAP)"/>
        </authorList>
    </citation>
    <scope>GENOME REANNOTATION</scope>
    <source>
        <strain>cv. Nipponbare</strain>
    </source>
</reference>
<reference key="4">
    <citation type="journal article" date="2013" name="Rice">
        <title>Improvement of the Oryza sativa Nipponbare reference genome using next generation sequence and optical map data.</title>
        <authorList>
            <person name="Kawahara Y."/>
            <person name="de la Bastide M."/>
            <person name="Hamilton J.P."/>
            <person name="Kanamori H."/>
            <person name="McCombie W.R."/>
            <person name="Ouyang S."/>
            <person name="Schwartz D.C."/>
            <person name="Tanaka T."/>
            <person name="Wu J."/>
            <person name="Zhou S."/>
            <person name="Childs K.L."/>
            <person name="Davidson R.M."/>
            <person name="Lin H."/>
            <person name="Quesada-Ocampo L."/>
            <person name="Vaillancourt B."/>
            <person name="Sakai H."/>
            <person name="Lee S.S."/>
            <person name="Kim J."/>
            <person name="Numa H."/>
            <person name="Itoh T."/>
            <person name="Buell C.R."/>
            <person name="Matsumoto T."/>
        </authorList>
    </citation>
    <scope>GENOME REANNOTATION</scope>
    <source>
        <strain>cv. Nipponbare</strain>
    </source>
</reference>
<reference key="5">
    <citation type="journal article" date="2003" name="Science">
        <title>Collection, mapping, and annotation of over 28,000 cDNA clones from japonica rice.</title>
        <authorList>
            <consortium name="The rice full-length cDNA consortium"/>
        </authorList>
    </citation>
    <scope>NUCLEOTIDE SEQUENCE [LARGE SCALE MRNA]</scope>
    <source>
        <strain>cv. Nipponbare</strain>
    </source>
</reference>
<reference key="6">
    <citation type="journal article" date="2005" name="Plant Cell Physiol.">
        <title>Genome-wide identification of the rice calcium-dependent protein kinase and its closely related kinase gene families: comprehensive analysis of the CDPKs gene family in rice.</title>
        <authorList>
            <person name="Asano T."/>
            <person name="Tanaka N."/>
            <person name="Yang G."/>
            <person name="Hayashi N."/>
            <person name="Komatsu S."/>
        </authorList>
    </citation>
    <scope>GENE FAMILY</scope>
    <scope>NOMENCLATURE</scope>
    <scope>TISSUE SPECIFICITY</scope>
    <scope>INDUCTION</scope>
</reference>
<reference key="7">
    <citation type="journal article" date="2014" name="BMC Plant Biol.">
        <title>A rice calcium-dependent protein kinase OsCPK9 positively regulates drought stress tolerance and spikelet fertility.</title>
        <authorList>
            <person name="Wei S."/>
            <person name="Hu W."/>
            <person name="Deng X."/>
            <person name="Zhang Y."/>
            <person name="Liu X."/>
            <person name="Zhao X."/>
            <person name="Luo Q."/>
            <person name="Jin Z."/>
            <person name="Li Y."/>
            <person name="Zhou S."/>
            <person name="Sun T."/>
            <person name="Wang L."/>
            <person name="Yang G."/>
            <person name="He G."/>
        </authorList>
    </citation>
    <scope>FUNCTION</scope>
    <scope>TISSUE SPECIFICITY</scope>
    <scope>INDUCTION</scope>
</reference>
<evidence type="ECO:0000250" key="1">
    <source>
        <dbReference type="UniProtKB" id="Q06850"/>
    </source>
</evidence>
<evidence type="ECO:0000255" key="2"/>
<evidence type="ECO:0000255" key="3">
    <source>
        <dbReference type="PROSITE-ProRule" id="PRU00159"/>
    </source>
</evidence>
<evidence type="ECO:0000255" key="4">
    <source>
        <dbReference type="PROSITE-ProRule" id="PRU00448"/>
    </source>
</evidence>
<evidence type="ECO:0000256" key="5">
    <source>
        <dbReference type="SAM" id="MobiDB-lite"/>
    </source>
</evidence>
<evidence type="ECO:0000269" key="6">
    <source>
    </source>
</evidence>
<evidence type="ECO:0000269" key="7">
    <source>
    </source>
</evidence>
<evidence type="ECO:0000303" key="8">
    <source>
    </source>
</evidence>
<evidence type="ECO:0000305" key="9"/>
<evidence type="ECO:0000312" key="10">
    <source>
        <dbReference type="EMBL" id="AAT81734.1"/>
    </source>
</evidence>
<evidence type="ECO:0000312" key="11">
    <source>
        <dbReference type="EMBL" id="ABF98270.1"/>
    </source>
</evidence>
<evidence type="ECO:0000312" key="12">
    <source>
        <dbReference type="EMBL" id="BAF12858.1"/>
    </source>
</evidence>
<feature type="initiator methionine" description="Removed" evidence="2">
    <location>
        <position position="1"/>
    </location>
</feature>
<feature type="chain" id="PRO_0000437553" description="Calcium-dependent protein kinase 9">
    <location>
        <begin position="2"/>
        <end position="574"/>
    </location>
</feature>
<feature type="domain" description="Protein kinase" evidence="3">
    <location>
        <begin position="101"/>
        <end position="359"/>
    </location>
</feature>
<feature type="domain" description="EF-hand 1" evidence="4">
    <location>
        <begin position="402"/>
        <end position="437"/>
    </location>
</feature>
<feature type="domain" description="EF-hand 2" evidence="4">
    <location>
        <begin position="438"/>
        <end position="473"/>
    </location>
</feature>
<feature type="domain" description="EF-hand 3" evidence="4">
    <location>
        <begin position="474"/>
        <end position="509"/>
    </location>
</feature>
<feature type="domain" description="EF-hand 4" evidence="4">
    <location>
        <begin position="510"/>
        <end position="545"/>
    </location>
</feature>
<feature type="region of interest" description="Disordered" evidence="5">
    <location>
        <begin position="1"/>
        <end position="64"/>
    </location>
</feature>
<feature type="region of interest" description="Autoinhibitory domain" evidence="1">
    <location>
        <begin position="365"/>
        <end position="395"/>
    </location>
</feature>
<feature type="compositionally biased region" description="Low complexity" evidence="5">
    <location>
        <begin position="28"/>
        <end position="40"/>
    </location>
</feature>
<feature type="active site" description="Proton acceptor" evidence="3">
    <location>
        <position position="225"/>
    </location>
</feature>
<feature type="binding site" evidence="3">
    <location>
        <begin position="107"/>
        <end position="115"/>
    </location>
    <ligand>
        <name>ATP</name>
        <dbReference type="ChEBI" id="CHEBI:30616"/>
    </ligand>
</feature>
<feature type="binding site" evidence="3">
    <location>
        <position position="130"/>
    </location>
    <ligand>
        <name>ATP</name>
        <dbReference type="ChEBI" id="CHEBI:30616"/>
    </ligand>
</feature>
<feature type="binding site" evidence="4">
    <location>
        <position position="415"/>
    </location>
    <ligand>
        <name>Ca(2+)</name>
        <dbReference type="ChEBI" id="CHEBI:29108"/>
        <label>1</label>
    </ligand>
</feature>
<feature type="binding site" evidence="4">
    <location>
        <position position="417"/>
    </location>
    <ligand>
        <name>Ca(2+)</name>
        <dbReference type="ChEBI" id="CHEBI:29108"/>
        <label>1</label>
    </ligand>
</feature>
<feature type="binding site" evidence="4">
    <location>
        <position position="419"/>
    </location>
    <ligand>
        <name>Ca(2+)</name>
        <dbReference type="ChEBI" id="CHEBI:29108"/>
        <label>1</label>
    </ligand>
</feature>
<feature type="binding site" evidence="4">
    <location>
        <position position="421"/>
    </location>
    <ligand>
        <name>Ca(2+)</name>
        <dbReference type="ChEBI" id="CHEBI:29108"/>
        <label>1</label>
    </ligand>
</feature>
<feature type="binding site" evidence="4">
    <location>
        <position position="426"/>
    </location>
    <ligand>
        <name>Ca(2+)</name>
        <dbReference type="ChEBI" id="CHEBI:29108"/>
        <label>1</label>
    </ligand>
</feature>
<feature type="binding site" evidence="4">
    <location>
        <position position="451"/>
    </location>
    <ligand>
        <name>Ca(2+)</name>
        <dbReference type="ChEBI" id="CHEBI:29108"/>
        <label>2</label>
    </ligand>
</feature>
<feature type="binding site" evidence="4">
    <location>
        <position position="453"/>
    </location>
    <ligand>
        <name>Ca(2+)</name>
        <dbReference type="ChEBI" id="CHEBI:29108"/>
        <label>2</label>
    </ligand>
</feature>
<feature type="binding site" evidence="4">
    <location>
        <position position="455"/>
    </location>
    <ligand>
        <name>Ca(2+)</name>
        <dbReference type="ChEBI" id="CHEBI:29108"/>
        <label>2</label>
    </ligand>
</feature>
<feature type="binding site" evidence="4">
    <location>
        <position position="457"/>
    </location>
    <ligand>
        <name>Ca(2+)</name>
        <dbReference type="ChEBI" id="CHEBI:29108"/>
        <label>2</label>
    </ligand>
</feature>
<feature type="binding site" evidence="4">
    <location>
        <position position="462"/>
    </location>
    <ligand>
        <name>Ca(2+)</name>
        <dbReference type="ChEBI" id="CHEBI:29108"/>
        <label>2</label>
    </ligand>
</feature>
<feature type="binding site" evidence="4">
    <location>
        <position position="487"/>
    </location>
    <ligand>
        <name>Ca(2+)</name>
        <dbReference type="ChEBI" id="CHEBI:29108"/>
        <label>3</label>
    </ligand>
</feature>
<feature type="binding site" evidence="4">
    <location>
        <position position="489"/>
    </location>
    <ligand>
        <name>Ca(2+)</name>
        <dbReference type="ChEBI" id="CHEBI:29108"/>
        <label>3</label>
    </ligand>
</feature>
<feature type="binding site" evidence="4">
    <location>
        <position position="491"/>
    </location>
    <ligand>
        <name>Ca(2+)</name>
        <dbReference type="ChEBI" id="CHEBI:29108"/>
        <label>3</label>
    </ligand>
</feature>
<feature type="binding site" evidence="4">
    <location>
        <position position="493"/>
    </location>
    <ligand>
        <name>Ca(2+)</name>
        <dbReference type="ChEBI" id="CHEBI:29108"/>
        <label>3</label>
    </ligand>
</feature>
<feature type="binding site" evidence="4">
    <location>
        <position position="498"/>
    </location>
    <ligand>
        <name>Ca(2+)</name>
        <dbReference type="ChEBI" id="CHEBI:29108"/>
        <label>3</label>
    </ligand>
</feature>
<feature type="binding site" evidence="4">
    <location>
        <position position="523"/>
    </location>
    <ligand>
        <name>Ca(2+)</name>
        <dbReference type="ChEBI" id="CHEBI:29108"/>
        <label>4</label>
    </ligand>
</feature>
<feature type="binding site" evidence="4">
    <location>
        <position position="525"/>
    </location>
    <ligand>
        <name>Ca(2+)</name>
        <dbReference type="ChEBI" id="CHEBI:29108"/>
        <label>4</label>
    </ligand>
</feature>
<feature type="binding site" evidence="4">
    <location>
        <position position="527"/>
    </location>
    <ligand>
        <name>Ca(2+)</name>
        <dbReference type="ChEBI" id="CHEBI:29108"/>
        <label>4</label>
    </ligand>
</feature>
<feature type="binding site" evidence="4">
    <location>
        <position position="529"/>
    </location>
    <ligand>
        <name>Ca(2+)</name>
        <dbReference type="ChEBI" id="CHEBI:29108"/>
        <label>4</label>
    </ligand>
</feature>
<feature type="binding site" evidence="4">
    <location>
        <position position="534"/>
    </location>
    <ligand>
        <name>Ca(2+)</name>
        <dbReference type="ChEBI" id="CHEBI:29108"/>
        <label>4</label>
    </ligand>
</feature>
<feature type="lipid moiety-binding region" description="N-myristoyl glycine" evidence="2">
    <location>
        <position position="2"/>
    </location>
</feature>
<gene>
    <name evidence="8" type="primary">CPK9</name>
    <name evidence="12" type="ordered locus">Os03g0688300</name>
    <name evidence="11" type="ordered locus">LOC_Os03g48270</name>
    <name evidence="10" type="ORF">OSJNBa0022C08.19</name>
</gene>
<dbReference type="EC" id="2.7.11.1" evidence="9"/>
<dbReference type="EMBL" id="AC097277">
    <property type="protein sequence ID" value="AAT81734.1"/>
    <property type="molecule type" value="Genomic_DNA"/>
</dbReference>
<dbReference type="EMBL" id="DP000009">
    <property type="protein sequence ID" value="ABF98270.1"/>
    <property type="molecule type" value="Genomic_DNA"/>
</dbReference>
<dbReference type="EMBL" id="AP008209">
    <property type="protein sequence ID" value="BAF12858.1"/>
    <property type="molecule type" value="Genomic_DNA"/>
</dbReference>
<dbReference type="EMBL" id="AP014959">
    <property type="protein sequence ID" value="BAS85825.1"/>
    <property type="molecule type" value="Genomic_DNA"/>
</dbReference>
<dbReference type="EMBL" id="AK105102">
    <property type="protein sequence ID" value="BAG97094.1"/>
    <property type="molecule type" value="mRNA"/>
</dbReference>
<dbReference type="RefSeq" id="XP_015631324.1">
    <property type="nucleotide sequence ID" value="XM_015775838.1"/>
</dbReference>
<dbReference type="SMR" id="Q6AVI8"/>
<dbReference type="FunCoup" id="Q6AVI8">
    <property type="interactions" value="1667"/>
</dbReference>
<dbReference type="STRING" id="39947.Q6AVI8"/>
<dbReference type="PaxDb" id="39947-Q6AVI8"/>
<dbReference type="EnsemblPlants" id="Os03t0688300-01">
    <property type="protein sequence ID" value="Os03t0688300-01"/>
    <property type="gene ID" value="Os03g0688300"/>
</dbReference>
<dbReference type="Gramene" id="Os03t0688300-01">
    <property type="protein sequence ID" value="Os03t0688300-01"/>
    <property type="gene ID" value="Os03g0688300"/>
</dbReference>
<dbReference type="KEGG" id="dosa:Os03g0688300"/>
<dbReference type="eggNOG" id="KOG0032">
    <property type="taxonomic scope" value="Eukaryota"/>
</dbReference>
<dbReference type="HOGENOM" id="CLU_000288_37_3_1"/>
<dbReference type="InParanoid" id="Q6AVI8"/>
<dbReference type="OMA" id="YGESDHE"/>
<dbReference type="OrthoDB" id="40902at2759"/>
<dbReference type="Proteomes" id="UP000000763">
    <property type="component" value="Chromosome 3"/>
</dbReference>
<dbReference type="Proteomes" id="UP000059680">
    <property type="component" value="Chromosome 3"/>
</dbReference>
<dbReference type="GO" id="GO:0005737">
    <property type="term" value="C:cytoplasm"/>
    <property type="evidence" value="ECO:0000318"/>
    <property type="project" value="GO_Central"/>
</dbReference>
<dbReference type="GO" id="GO:0005634">
    <property type="term" value="C:nucleus"/>
    <property type="evidence" value="ECO:0000318"/>
    <property type="project" value="GO_Central"/>
</dbReference>
<dbReference type="GO" id="GO:0005886">
    <property type="term" value="C:plasma membrane"/>
    <property type="evidence" value="ECO:0000318"/>
    <property type="project" value="GO_Central"/>
</dbReference>
<dbReference type="GO" id="GO:0005524">
    <property type="term" value="F:ATP binding"/>
    <property type="evidence" value="ECO:0007669"/>
    <property type="project" value="UniProtKB-KW"/>
</dbReference>
<dbReference type="GO" id="GO:0005509">
    <property type="term" value="F:calcium ion binding"/>
    <property type="evidence" value="ECO:0007669"/>
    <property type="project" value="InterPro"/>
</dbReference>
<dbReference type="GO" id="GO:0009931">
    <property type="term" value="F:calcium-dependent protein serine/threonine kinase activity"/>
    <property type="evidence" value="ECO:0000318"/>
    <property type="project" value="GO_Central"/>
</dbReference>
<dbReference type="GO" id="GO:0004683">
    <property type="term" value="F:calcium/calmodulin-dependent protein kinase activity"/>
    <property type="evidence" value="ECO:0000318"/>
    <property type="project" value="GO_Central"/>
</dbReference>
<dbReference type="GO" id="GO:0005516">
    <property type="term" value="F:calmodulin binding"/>
    <property type="evidence" value="ECO:0000318"/>
    <property type="project" value="GO_Central"/>
</dbReference>
<dbReference type="GO" id="GO:0106310">
    <property type="term" value="F:protein serine kinase activity"/>
    <property type="evidence" value="ECO:0007669"/>
    <property type="project" value="RHEA"/>
</dbReference>
<dbReference type="GO" id="GO:0035556">
    <property type="term" value="P:intracellular signal transduction"/>
    <property type="evidence" value="ECO:0000318"/>
    <property type="project" value="GO_Central"/>
</dbReference>
<dbReference type="GO" id="GO:0010152">
    <property type="term" value="P:pollen maturation"/>
    <property type="evidence" value="ECO:0000315"/>
    <property type="project" value="UniProtKB"/>
</dbReference>
<dbReference type="GO" id="GO:1902584">
    <property type="term" value="P:positive regulation of response to water deprivation"/>
    <property type="evidence" value="ECO:0000315"/>
    <property type="project" value="UniProtKB"/>
</dbReference>
<dbReference type="GO" id="GO:0006970">
    <property type="term" value="P:response to osmotic stress"/>
    <property type="evidence" value="ECO:0000315"/>
    <property type="project" value="UniProtKB"/>
</dbReference>
<dbReference type="CDD" id="cd00051">
    <property type="entry name" value="EFh"/>
    <property type="match status" value="1"/>
</dbReference>
<dbReference type="CDD" id="cd05117">
    <property type="entry name" value="STKc_CAMK"/>
    <property type="match status" value="1"/>
</dbReference>
<dbReference type="FunFam" id="3.30.200.20:FF:000004">
    <property type="entry name" value="Calcium-dependent protein kinase 1"/>
    <property type="match status" value="1"/>
</dbReference>
<dbReference type="FunFam" id="1.10.510.10:FF:000067">
    <property type="entry name" value="calcium-dependent protein kinase 13"/>
    <property type="match status" value="1"/>
</dbReference>
<dbReference type="FunFam" id="1.10.238.10:FF:000050">
    <property type="entry name" value="Calcium-dependent protein kinase 7"/>
    <property type="match status" value="1"/>
</dbReference>
<dbReference type="Gene3D" id="1.10.238.10">
    <property type="entry name" value="EF-hand"/>
    <property type="match status" value="1"/>
</dbReference>
<dbReference type="Gene3D" id="3.30.200.20">
    <property type="entry name" value="Phosphorylase Kinase, domain 1"/>
    <property type="match status" value="1"/>
</dbReference>
<dbReference type="Gene3D" id="1.10.510.10">
    <property type="entry name" value="Transferase(Phosphotransferase) domain 1"/>
    <property type="match status" value="1"/>
</dbReference>
<dbReference type="InterPro" id="IPR050205">
    <property type="entry name" value="CDPK_Ser/Thr_kinases"/>
</dbReference>
<dbReference type="InterPro" id="IPR011992">
    <property type="entry name" value="EF-hand-dom_pair"/>
</dbReference>
<dbReference type="InterPro" id="IPR018247">
    <property type="entry name" value="EF_Hand_1_Ca_BS"/>
</dbReference>
<dbReference type="InterPro" id="IPR002048">
    <property type="entry name" value="EF_hand_dom"/>
</dbReference>
<dbReference type="InterPro" id="IPR011009">
    <property type="entry name" value="Kinase-like_dom_sf"/>
</dbReference>
<dbReference type="InterPro" id="IPR000719">
    <property type="entry name" value="Prot_kinase_dom"/>
</dbReference>
<dbReference type="InterPro" id="IPR017441">
    <property type="entry name" value="Protein_kinase_ATP_BS"/>
</dbReference>
<dbReference type="InterPro" id="IPR008271">
    <property type="entry name" value="Ser/Thr_kinase_AS"/>
</dbReference>
<dbReference type="PANTHER" id="PTHR24349">
    <property type="entry name" value="SERINE/THREONINE-PROTEIN KINASE"/>
    <property type="match status" value="1"/>
</dbReference>
<dbReference type="Pfam" id="PF13499">
    <property type="entry name" value="EF-hand_7"/>
    <property type="match status" value="2"/>
</dbReference>
<dbReference type="Pfam" id="PF00069">
    <property type="entry name" value="Pkinase"/>
    <property type="match status" value="1"/>
</dbReference>
<dbReference type="SMART" id="SM00054">
    <property type="entry name" value="EFh"/>
    <property type="match status" value="4"/>
</dbReference>
<dbReference type="SMART" id="SM00220">
    <property type="entry name" value="S_TKc"/>
    <property type="match status" value="1"/>
</dbReference>
<dbReference type="SUPFAM" id="SSF47473">
    <property type="entry name" value="EF-hand"/>
    <property type="match status" value="1"/>
</dbReference>
<dbReference type="SUPFAM" id="SSF56112">
    <property type="entry name" value="Protein kinase-like (PK-like)"/>
    <property type="match status" value="1"/>
</dbReference>
<dbReference type="PROSITE" id="PS00018">
    <property type="entry name" value="EF_HAND_1"/>
    <property type="match status" value="4"/>
</dbReference>
<dbReference type="PROSITE" id="PS50222">
    <property type="entry name" value="EF_HAND_2"/>
    <property type="match status" value="4"/>
</dbReference>
<dbReference type="PROSITE" id="PS00107">
    <property type="entry name" value="PROTEIN_KINASE_ATP"/>
    <property type="match status" value="1"/>
</dbReference>
<dbReference type="PROSITE" id="PS50011">
    <property type="entry name" value="PROTEIN_KINASE_DOM"/>
    <property type="match status" value="1"/>
</dbReference>
<dbReference type="PROSITE" id="PS00108">
    <property type="entry name" value="PROTEIN_KINASE_ST"/>
    <property type="match status" value="1"/>
</dbReference>
<keyword id="KW-0067">ATP-binding</keyword>
<keyword id="KW-0106">Calcium</keyword>
<keyword id="KW-0418">Kinase</keyword>
<keyword id="KW-0449">Lipoprotein</keyword>
<keyword id="KW-0472">Membrane</keyword>
<keyword id="KW-0479">Metal-binding</keyword>
<keyword id="KW-0519">Myristate</keyword>
<keyword id="KW-0547">Nucleotide-binding</keyword>
<keyword id="KW-1185">Reference proteome</keyword>
<keyword id="KW-0677">Repeat</keyword>
<keyword id="KW-0723">Serine/threonine-protein kinase</keyword>
<keyword id="KW-0346">Stress response</keyword>
<keyword id="KW-0808">Transferase</keyword>
<name>CDPK9_ORYSJ</name>
<comment type="function">
    <text evidence="1 7">May play a role in signal transduction pathways that involve calcium as a second messenger (By similarity). Functions in signal transduction pathways that positively regulate responses to drought, osmotic, and dehydration stress. Regulates expression of stress-associated genes in response to drought. Involved in tolerance to drought stress by increasing proline and soluble sugars, and improving stomatal closure. Required for pollen maturation and spikelet fertility (PubMed:24884869).</text>
</comment>
<comment type="catalytic activity">
    <reaction evidence="9">
        <text>L-seryl-[protein] + ATP = O-phospho-L-seryl-[protein] + ADP + H(+)</text>
        <dbReference type="Rhea" id="RHEA:17989"/>
        <dbReference type="Rhea" id="RHEA-COMP:9863"/>
        <dbReference type="Rhea" id="RHEA-COMP:11604"/>
        <dbReference type="ChEBI" id="CHEBI:15378"/>
        <dbReference type="ChEBI" id="CHEBI:29999"/>
        <dbReference type="ChEBI" id="CHEBI:30616"/>
        <dbReference type="ChEBI" id="CHEBI:83421"/>
        <dbReference type="ChEBI" id="CHEBI:456216"/>
        <dbReference type="EC" id="2.7.11.1"/>
    </reaction>
</comment>
<comment type="catalytic activity">
    <reaction evidence="9">
        <text>L-threonyl-[protein] + ATP = O-phospho-L-threonyl-[protein] + ADP + H(+)</text>
        <dbReference type="Rhea" id="RHEA:46608"/>
        <dbReference type="Rhea" id="RHEA-COMP:11060"/>
        <dbReference type="Rhea" id="RHEA-COMP:11605"/>
        <dbReference type="ChEBI" id="CHEBI:15378"/>
        <dbReference type="ChEBI" id="CHEBI:30013"/>
        <dbReference type="ChEBI" id="CHEBI:30616"/>
        <dbReference type="ChEBI" id="CHEBI:61977"/>
        <dbReference type="ChEBI" id="CHEBI:456216"/>
        <dbReference type="EC" id="2.7.11.1"/>
    </reaction>
</comment>
<comment type="activity regulation">
    <text evidence="1">Activated by calcium. Autophosphorylation may play an important role in the regulation of the kinase activity.</text>
</comment>
<comment type="subcellular location">
    <subcellularLocation>
        <location evidence="9">Membrane</location>
        <topology evidence="9">Lipid-anchor</topology>
    </subcellularLocation>
</comment>
<comment type="tissue specificity">
    <text evidence="6 7">Expressed in leaf blades and stems (PubMed:15695435, PubMed:24884869). Expressed at low levels in anthers and spikelets (PubMed:24884869).</text>
</comment>
<comment type="induction">
    <text evidence="6 7">By infection with the rice blast fungus (M.oryzae) (PubMed:15695435). Induced by abscisic acid (ABA), salt stress and osmotic shock (PubMed:24884869).</text>
</comment>
<comment type="domain">
    <text evidence="1">There are 3 contiguous domains conserved in the CDPK subfamily: a kinase domain, an autoinhibitory (junction) domain and a calmodulin-like domain. The autoinhibitory domain (365-395) inactivates kinase activity under calcium-free conditions.</text>
</comment>
<comment type="miscellaneous">
    <text evidence="7">Plants over-expressing CPK9 show increased tolerance to drought, osmotic, and dehydration stresses, and improved pollen maturation and spikelet fertility under normal growth conditions. Plants silencing CPK9 show decreased tolerance to drought, osmotic, and dehydration stresses, and diminished pollen maturation and spikelet fertility under normal growth conditions.</text>
</comment>
<comment type="similarity">
    <text evidence="9">Belongs to the protein kinase superfamily. Ser/Thr protein kinase family. CDPK subfamily.</text>
</comment>
<proteinExistence type="evidence at transcript level"/>
<protein>
    <recommendedName>
        <fullName evidence="9">Calcium-dependent protein kinase 9</fullName>
        <shortName evidence="9">OsCDPK9</shortName>
        <shortName evidence="8">OsCPK9</shortName>
        <ecNumber evidence="9">2.7.11.1</ecNumber>
    </recommendedName>
</protein>
<organism>
    <name type="scientific">Oryza sativa subsp. japonica</name>
    <name type="common">Rice</name>
    <dbReference type="NCBI Taxonomy" id="39947"/>
    <lineage>
        <taxon>Eukaryota</taxon>
        <taxon>Viridiplantae</taxon>
        <taxon>Streptophyta</taxon>
        <taxon>Embryophyta</taxon>
        <taxon>Tracheophyta</taxon>
        <taxon>Spermatophyta</taxon>
        <taxon>Magnoliopsida</taxon>
        <taxon>Liliopsida</taxon>
        <taxon>Poales</taxon>
        <taxon>Poaceae</taxon>
        <taxon>BOP clade</taxon>
        <taxon>Oryzoideae</taxon>
        <taxon>Oryzeae</taxon>
        <taxon>Oryzinae</taxon>
        <taxon>Oryza</taxon>
        <taxon>Oryza sativa</taxon>
    </lineage>
</organism>